<name>TOLB_SHESA</name>
<gene>
    <name evidence="1" type="primary">tolB</name>
    <name type="ordered locus">Shewana3_2531</name>
</gene>
<sequence length="442" mass="48358">MKILAKWLALAVLLCTMPAKAALDIVITEGVDAARPIAVMPFQWQGAGAPPQAIADVVMSDLIRSGTFKPLDELGLPQRGIGALAQFDASAWANVGAEAVVVGSVKPYGTDQFLVSFDLIDLVKAQNQALKGPTSATEFLMDSRQTVISAAQFRQYGHRISDIVYEKLTGIRGAFLTRISYVVVNHTQKAAYSLMIADYDGYNEQMLLRSPEPLMSPSWSPDGRRLAYVSFENKKAEIFVQDLYTQVRTKVSSFPGINGAPTFSPDGKSLAVTLSKDGQPEIYVIDIATKAAKRITNHYSIDTEPSWYPDGKSLLFTSERGGRPQLYRVDLNSGKVTRETFEGEWNLGGSITPDGRSMIFVNRTNGKFNIARMDLSTRFMQVLTSTRLDESPSVAPNGTMVIYGTTYQGKQVLAAVSTDGRFKARLPVGQGEVKSPSWSPFL</sequence>
<proteinExistence type="inferred from homology"/>
<dbReference type="EMBL" id="CP000469">
    <property type="protein sequence ID" value="ABK48758.1"/>
    <property type="molecule type" value="Genomic_DNA"/>
</dbReference>
<dbReference type="RefSeq" id="WP_011717444.1">
    <property type="nucleotide sequence ID" value="NC_008577.1"/>
</dbReference>
<dbReference type="SMR" id="A0KY89"/>
<dbReference type="STRING" id="94122.Shewana3_2531"/>
<dbReference type="GeneID" id="94728476"/>
<dbReference type="KEGG" id="shn:Shewana3_2531"/>
<dbReference type="eggNOG" id="COG0823">
    <property type="taxonomic scope" value="Bacteria"/>
</dbReference>
<dbReference type="HOGENOM" id="CLU_047123_0_0_6"/>
<dbReference type="OrthoDB" id="9802240at2"/>
<dbReference type="Proteomes" id="UP000002589">
    <property type="component" value="Chromosome"/>
</dbReference>
<dbReference type="GO" id="GO:0042597">
    <property type="term" value="C:periplasmic space"/>
    <property type="evidence" value="ECO:0007669"/>
    <property type="project" value="UniProtKB-SubCell"/>
</dbReference>
<dbReference type="GO" id="GO:0051301">
    <property type="term" value="P:cell division"/>
    <property type="evidence" value="ECO:0007669"/>
    <property type="project" value="UniProtKB-UniRule"/>
</dbReference>
<dbReference type="GO" id="GO:0017038">
    <property type="term" value="P:protein import"/>
    <property type="evidence" value="ECO:0007669"/>
    <property type="project" value="InterPro"/>
</dbReference>
<dbReference type="Gene3D" id="2.120.10.30">
    <property type="entry name" value="TolB, C-terminal domain"/>
    <property type="match status" value="1"/>
</dbReference>
<dbReference type="Gene3D" id="3.40.50.10070">
    <property type="entry name" value="TolB, N-terminal domain"/>
    <property type="match status" value="1"/>
</dbReference>
<dbReference type="HAMAP" id="MF_00671">
    <property type="entry name" value="TolB"/>
    <property type="match status" value="1"/>
</dbReference>
<dbReference type="InterPro" id="IPR011042">
    <property type="entry name" value="6-blade_b-propeller_TolB-like"/>
</dbReference>
<dbReference type="InterPro" id="IPR011659">
    <property type="entry name" value="PD40"/>
</dbReference>
<dbReference type="InterPro" id="IPR014167">
    <property type="entry name" value="Tol-Pal_TolB"/>
</dbReference>
<dbReference type="InterPro" id="IPR007195">
    <property type="entry name" value="TolB_N"/>
</dbReference>
<dbReference type="NCBIfam" id="TIGR02800">
    <property type="entry name" value="propeller_TolB"/>
    <property type="match status" value="1"/>
</dbReference>
<dbReference type="PANTHER" id="PTHR36842:SF1">
    <property type="entry name" value="PROTEIN TOLB"/>
    <property type="match status" value="1"/>
</dbReference>
<dbReference type="PANTHER" id="PTHR36842">
    <property type="entry name" value="PROTEIN TOLB HOMOLOG"/>
    <property type="match status" value="1"/>
</dbReference>
<dbReference type="Pfam" id="PF07676">
    <property type="entry name" value="PD40"/>
    <property type="match status" value="4"/>
</dbReference>
<dbReference type="Pfam" id="PF04052">
    <property type="entry name" value="TolB_N"/>
    <property type="match status" value="1"/>
</dbReference>
<dbReference type="SUPFAM" id="SSF52964">
    <property type="entry name" value="TolB, N-terminal domain"/>
    <property type="match status" value="1"/>
</dbReference>
<dbReference type="SUPFAM" id="SSF69304">
    <property type="entry name" value="Tricorn protease N-terminal domain"/>
    <property type="match status" value="1"/>
</dbReference>
<organism>
    <name type="scientific">Shewanella sp. (strain ANA-3)</name>
    <dbReference type="NCBI Taxonomy" id="94122"/>
    <lineage>
        <taxon>Bacteria</taxon>
        <taxon>Pseudomonadati</taxon>
        <taxon>Pseudomonadota</taxon>
        <taxon>Gammaproteobacteria</taxon>
        <taxon>Alteromonadales</taxon>
        <taxon>Shewanellaceae</taxon>
        <taxon>Shewanella</taxon>
    </lineage>
</organism>
<accession>A0KY89</accession>
<evidence type="ECO:0000255" key="1">
    <source>
        <dbReference type="HAMAP-Rule" id="MF_00671"/>
    </source>
</evidence>
<comment type="function">
    <text evidence="1">Part of the Tol-Pal system, which plays a role in outer membrane invagination during cell division and is important for maintaining outer membrane integrity.</text>
</comment>
<comment type="subunit">
    <text evidence="1">The Tol-Pal system is composed of five core proteins: the inner membrane proteins TolA, TolQ and TolR, the periplasmic protein TolB and the outer membrane protein Pal. They form a network linking the inner and outer membranes and the peptidoglycan layer.</text>
</comment>
<comment type="subcellular location">
    <subcellularLocation>
        <location evidence="1">Periplasm</location>
    </subcellularLocation>
</comment>
<comment type="similarity">
    <text evidence="1">Belongs to the TolB family.</text>
</comment>
<keyword id="KW-0131">Cell cycle</keyword>
<keyword id="KW-0132">Cell division</keyword>
<keyword id="KW-0574">Periplasm</keyword>
<keyword id="KW-0732">Signal</keyword>
<feature type="signal peptide" evidence="1">
    <location>
        <begin position="1"/>
        <end position="21"/>
    </location>
</feature>
<feature type="chain" id="PRO_1000061939" description="Tol-Pal system protein TolB" evidence="1">
    <location>
        <begin position="22"/>
        <end position="442"/>
    </location>
</feature>
<reference key="1">
    <citation type="submission" date="2006-09" db="EMBL/GenBank/DDBJ databases">
        <title>Complete sequence of chromosome 1 of Shewanella sp. ANA-3.</title>
        <authorList>
            <person name="Copeland A."/>
            <person name="Lucas S."/>
            <person name="Lapidus A."/>
            <person name="Barry K."/>
            <person name="Detter J.C."/>
            <person name="Glavina del Rio T."/>
            <person name="Hammon N."/>
            <person name="Israni S."/>
            <person name="Dalin E."/>
            <person name="Tice H."/>
            <person name="Pitluck S."/>
            <person name="Chertkov O."/>
            <person name="Brettin T."/>
            <person name="Bruce D."/>
            <person name="Han C."/>
            <person name="Tapia R."/>
            <person name="Gilna P."/>
            <person name="Schmutz J."/>
            <person name="Larimer F."/>
            <person name="Land M."/>
            <person name="Hauser L."/>
            <person name="Kyrpides N."/>
            <person name="Kim E."/>
            <person name="Newman D."/>
            <person name="Salticov C."/>
            <person name="Konstantinidis K."/>
            <person name="Klappenback J."/>
            <person name="Tiedje J."/>
            <person name="Richardson P."/>
        </authorList>
    </citation>
    <scope>NUCLEOTIDE SEQUENCE [LARGE SCALE GENOMIC DNA]</scope>
    <source>
        <strain>ANA-3</strain>
    </source>
</reference>
<protein>
    <recommendedName>
        <fullName evidence="1">Tol-Pal system protein TolB</fullName>
    </recommendedName>
</protein>